<evidence type="ECO:0000255" key="1">
    <source>
        <dbReference type="HAMAP-Rule" id="MF_00652"/>
    </source>
</evidence>
<name>Y769_RICFE</name>
<feature type="chain" id="PRO_0000262051" description="UPF0246 protein RF_0769">
    <location>
        <begin position="1"/>
        <end position="248"/>
    </location>
</feature>
<sequence>MLVIISSAKTLNFEKLALKTELTTSIFPNLTNQLLSTLQSYSENQLSEIMNISTKLAHINKERFKDFNNQESKAAIFAYAGDVFNNIHVEKLTNHELNFLQSHLLIISGLYGALKPLDAIKPYRLEMTTKLNEINLTSFWQDEITDYINKVLAKHENKYLLNLASQEYSSVVNPNKLKYQLVNIHFKENRDGKLSTIGINAKKARGAMVNVIANNLIDSPELLKNFPYLGYEFSPKHSSDSELVFIKE</sequence>
<protein>
    <recommendedName>
        <fullName evidence="1">UPF0246 protein RF_0769</fullName>
    </recommendedName>
</protein>
<accession>Q4ULF3</accession>
<dbReference type="EMBL" id="CP000053">
    <property type="protein sequence ID" value="AAY61620.1"/>
    <property type="molecule type" value="Genomic_DNA"/>
</dbReference>
<dbReference type="SMR" id="Q4ULF3"/>
<dbReference type="STRING" id="315456.RF_0769"/>
<dbReference type="KEGG" id="rfe:RF_0769"/>
<dbReference type="eggNOG" id="COG3022">
    <property type="taxonomic scope" value="Bacteria"/>
</dbReference>
<dbReference type="HOGENOM" id="CLU_061989_0_0_5"/>
<dbReference type="OrthoDB" id="9777133at2"/>
<dbReference type="Proteomes" id="UP000008548">
    <property type="component" value="Chromosome"/>
</dbReference>
<dbReference type="GO" id="GO:0005829">
    <property type="term" value="C:cytosol"/>
    <property type="evidence" value="ECO:0007669"/>
    <property type="project" value="TreeGrafter"/>
</dbReference>
<dbReference type="GO" id="GO:0033194">
    <property type="term" value="P:response to hydroperoxide"/>
    <property type="evidence" value="ECO:0007669"/>
    <property type="project" value="TreeGrafter"/>
</dbReference>
<dbReference type="HAMAP" id="MF_00652">
    <property type="entry name" value="UPF0246"/>
    <property type="match status" value="1"/>
</dbReference>
<dbReference type="InterPro" id="IPR005583">
    <property type="entry name" value="YaaA"/>
</dbReference>
<dbReference type="PANTHER" id="PTHR30283:SF4">
    <property type="entry name" value="PEROXIDE STRESS RESISTANCE PROTEIN YAAA"/>
    <property type="match status" value="1"/>
</dbReference>
<dbReference type="PANTHER" id="PTHR30283">
    <property type="entry name" value="PEROXIDE STRESS RESPONSE PROTEIN YAAA"/>
    <property type="match status" value="1"/>
</dbReference>
<dbReference type="Pfam" id="PF03883">
    <property type="entry name" value="H2O2_YaaD"/>
    <property type="match status" value="1"/>
</dbReference>
<organism>
    <name type="scientific">Rickettsia felis (strain ATCC VR-1525 / URRWXCal2)</name>
    <name type="common">Rickettsia azadi</name>
    <dbReference type="NCBI Taxonomy" id="315456"/>
    <lineage>
        <taxon>Bacteria</taxon>
        <taxon>Pseudomonadati</taxon>
        <taxon>Pseudomonadota</taxon>
        <taxon>Alphaproteobacteria</taxon>
        <taxon>Rickettsiales</taxon>
        <taxon>Rickettsiaceae</taxon>
        <taxon>Rickettsieae</taxon>
        <taxon>Rickettsia</taxon>
        <taxon>spotted fever group</taxon>
    </lineage>
</organism>
<comment type="similarity">
    <text evidence="1">Belongs to the UPF0246 family.</text>
</comment>
<gene>
    <name type="ordered locus">RF_0769</name>
</gene>
<proteinExistence type="inferred from homology"/>
<reference key="1">
    <citation type="journal article" date="2005" name="PLoS Biol.">
        <title>The genome sequence of Rickettsia felis identifies the first putative conjugative plasmid in an obligate intracellular parasite.</title>
        <authorList>
            <person name="Ogata H."/>
            <person name="Renesto P."/>
            <person name="Audic S."/>
            <person name="Robert C."/>
            <person name="Blanc G."/>
            <person name="Fournier P.-E."/>
            <person name="Parinello H."/>
            <person name="Claverie J.-M."/>
            <person name="Raoult D."/>
        </authorList>
    </citation>
    <scope>NUCLEOTIDE SEQUENCE [LARGE SCALE GENOMIC DNA]</scope>
    <source>
        <strain>ATCC VR-1525 / URRWXCal2</strain>
    </source>
</reference>